<accession>Q81NL0</accession>
<accession>Q6HWS3</accession>
<accession>Q6KQW6</accession>
<feature type="chain" id="PRO_0000387234" description="Probable inorganic carbon transporter subunit DabA">
    <location>
        <begin position="1"/>
        <end position="874"/>
    </location>
</feature>
<feature type="binding site" evidence="1">
    <location>
        <position position="398"/>
    </location>
    <ligand>
        <name>Zn(2+)</name>
        <dbReference type="ChEBI" id="CHEBI:29105"/>
    </ligand>
</feature>
<feature type="binding site" evidence="1">
    <location>
        <position position="400"/>
    </location>
    <ligand>
        <name>Zn(2+)</name>
        <dbReference type="ChEBI" id="CHEBI:29105"/>
    </ligand>
</feature>
<feature type="binding site" evidence="1">
    <location>
        <position position="580"/>
    </location>
    <ligand>
        <name>Zn(2+)</name>
        <dbReference type="ChEBI" id="CHEBI:29105"/>
    </ligand>
</feature>
<feature type="binding site" evidence="1">
    <location>
        <position position="595"/>
    </location>
    <ligand>
        <name>Zn(2+)</name>
        <dbReference type="ChEBI" id="CHEBI:29105"/>
    </ligand>
</feature>
<dbReference type="EMBL" id="AE016879">
    <property type="protein sequence ID" value="AAP26978.1"/>
    <property type="molecule type" value="Genomic_DNA"/>
</dbReference>
<dbReference type="EMBL" id="AE017334">
    <property type="protein sequence ID" value="AAT32298.1"/>
    <property type="molecule type" value="Genomic_DNA"/>
</dbReference>
<dbReference type="EMBL" id="AE017225">
    <property type="protein sequence ID" value="AAT55266.1"/>
    <property type="molecule type" value="Genomic_DNA"/>
</dbReference>
<dbReference type="RefSeq" id="NP_845492.1">
    <property type="nucleotide sequence ID" value="NC_003997.3"/>
</dbReference>
<dbReference type="RefSeq" id="WP_000026985.1">
    <property type="nucleotide sequence ID" value="NZ_WXXJ01000008.1"/>
</dbReference>
<dbReference type="RefSeq" id="YP_029215.1">
    <property type="nucleotide sequence ID" value="NC_005945.1"/>
</dbReference>
<dbReference type="SMR" id="Q81NL0"/>
<dbReference type="STRING" id="261594.GBAA_3182"/>
<dbReference type="DNASU" id="1086884"/>
<dbReference type="GeneID" id="45022968"/>
<dbReference type="KEGG" id="ban:BA_3182"/>
<dbReference type="KEGG" id="bar:GBAA_3182"/>
<dbReference type="KEGG" id="bat:BAS2958"/>
<dbReference type="PATRIC" id="fig|198094.11.peg.3167"/>
<dbReference type="eggNOG" id="COG3002">
    <property type="taxonomic scope" value="Bacteria"/>
</dbReference>
<dbReference type="HOGENOM" id="CLU_009885_0_0_9"/>
<dbReference type="OMA" id="WTMPNRE"/>
<dbReference type="OrthoDB" id="9805101at2"/>
<dbReference type="Proteomes" id="UP000000427">
    <property type="component" value="Chromosome"/>
</dbReference>
<dbReference type="Proteomes" id="UP000000594">
    <property type="component" value="Chromosome"/>
</dbReference>
<dbReference type="GO" id="GO:0005886">
    <property type="term" value="C:plasma membrane"/>
    <property type="evidence" value="ECO:0007669"/>
    <property type="project" value="UniProtKB-SubCell"/>
</dbReference>
<dbReference type="GO" id="GO:0008270">
    <property type="term" value="F:zinc ion binding"/>
    <property type="evidence" value="ECO:0007669"/>
    <property type="project" value="UniProtKB-UniRule"/>
</dbReference>
<dbReference type="HAMAP" id="MF_01871">
    <property type="entry name" value="DabA"/>
    <property type="match status" value="1"/>
</dbReference>
<dbReference type="InterPro" id="IPR018752">
    <property type="entry name" value="DabA"/>
</dbReference>
<dbReference type="PANTHER" id="PTHR38344:SF1">
    <property type="entry name" value="INORGANIC CARBON TRANSPORTER SUBUNIT DABA-RELATED"/>
    <property type="match status" value="1"/>
</dbReference>
<dbReference type="PANTHER" id="PTHR38344">
    <property type="entry name" value="UPF0753 PROTEIN AQ_863"/>
    <property type="match status" value="1"/>
</dbReference>
<dbReference type="Pfam" id="PF10070">
    <property type="entry name" value="DabA"/>
    <property type="match status" value="1"/>
</dbReference>
<sequence length="874" mass="99265">MSIPSILRKETLKKKDKNIDLQENNINDLVVSASRVIAPLWPISTFAAHHPWMGLEKQSFEQVANWLKEARNVDIYPSASMIHSAKAKGEIEESFLQIALSRWLDSQSFHMPRETAERFCQEALKLERLPSSLLSSPELNKLAEEINYVNTGSMKDSSMQPISSLIENQNGDNLSDILNYHIIKWCKLYLDDAGASWAMPNREKGFYRAWQHLITFDPALSKTERKVLKDWPEDALIALTKALSELGISESNMQAYLEGHLLSLPGWAGMIRWRSQQSIEEQELLIEYLAVRLSMELAIVKPYLPLKNQKVEKKVSIVPLIASWIYWGDISIEKWLQMSATEQSELLAFAYRFDENTRKKLWLEAWEQTHAEQLREKIASKQRATHDKKRVVAQLAFCIDVRSEPFRRHLEKLGPFETFGIAGFFGLPIATTELGSNDSHPSLPVILKPKHQIKELTDENECKSYEQRKMVGSSVRYTFKTMKQNVLTSMLLPEVSGPLLGLQMVTRSFVPRRVGGFIRNLRKNMLQKPDTTFSLNHVHDTNCEIPIGFTKEEKVNYVRQTLKMVGLTEGFAPLVVMCGHSSQSTNNPYAAALECGACGGAAGGFNARVFATLCNLPEVREALSAEGIKIPDDTIFAAAEHKTTVDELEWIYVPELSETAQEAFDCIEAIMPNVSQHANRERLMQLPHFKTKIKNPSKEAHRFAEDWSEIRPEWGLARNASFIIGQRELTQECDLEGRAFLHNYDWKQDESGDILANIIAGPGTVAQWINLQYYASTVAPHYYGSGNKATQTVTAGLGVMQGNASDLLPGLPWQSVMQSDRETYHSPLRLLIVIQAPTKYIERLLNNNFTFREKVQNGWVRLASVDPEGRWKNW</sequence>
<reference key="1">
    <citation type="journal article" date="2003" name="Nature">
        <title>The genome sequence of Bacillus anthracis Ames and comparison to closely related bacteria.</title>
        <authorList>
            <person name="Read T.D."/>
            <person name="Peterson S.N."/>
            <person name="Tourasse N.J."/>
            <person name="Baillie L.W."/>
            <person name="Paulsen I.T."/>
            <person name="Nelson K.E."/>
            <person name="Tettelin H."/>
            <person name="Fouts D.E."/>
            <person name="Eisen J.A."/>
            <person name="Gill S.R."/>
            <person name="Holtzapple E.K."/>
            <person name="Okstad O.A."/>
            <person name="Helgason E."/>
            <person name="Rilstone J."/>
            <person name="Wu M."/>
            <person name="Kolonay J.F."/>
            <person name="Beanan M.J."/>
            <person name="Dodson R.J."/>
            <person name="Brinkac L.M."/>
            <person name="Gwinn M.L."/>
            <person name="DeBoy R.T."/>
            <person name="Madpu R."/>
            <person name="Daugherty S.C."/>
            <person name="Durkin A.S."/>
            <person name="Haft D.H."/>
            <person name="Nelson W.C."/>
            <person name="Peterson J.D."/>
            <person name="Pop M."/>
            <person name="Khouri H.M."/>
            <person name="Radune D."/>
            <person name="Benton J.L."/>
            <person name="Mahamoud Y."/>
            <person name="Jiang L."/>
            <person name="Hance I.R."/>
            <person name="Weidman J.F."/>
            <person name="Berry K.J."/>
            <person name="Plaut R.D."/>
            <person name="Wolf A.M."/>
            <person name="Watkins K.L."/>
            <person name="Nierman W.C."/>
            <person name="Hazen A."/>
            <person name="Cline R.T."/>
            <person name="Redmond C."/>
            <person name="Thwaite J.E."/>
            <person name="White O."/>
            <person name="Salzberg S.L."/>
            <person name="Thomason B."/>
            <person name="Friedlander A.M."/>
            <person name="Koehler T.M."/>
            <person name="Hanna P.C."/>
            <person name="Kolstoe A.-B."/>
            <person name="Fraser C.M."/>
        </authorList>
    </citation>
    <scope>NUCLEOTIDE SEQUENCE [LARGE SCALE GENOMIC DNA]</scope>
    <source>
        <strain>Ames / isolate Porton</strain>
    </source>
</reference>
<reference key="2">
    <citation type="submission" date="2004-01" db="EMBL/GenBank/DDBJ databases">
        <title>Complete genome sequence of Bacillus anthracis Sterne.</title>
        <authorList>
            <person name="Brettin T.S."/>
            <person name="Bruce D."/>
            <person name="Challacombe J.F."/>
            <person name="Gilna P."/>
            <person name="Han C."/>
            <person name="Hill K."/>
            <person name="Hitchcock P."/>
            <person name="Jackson P."/>
            <person name="Keim P."/>
            <person name="Longmire J."/>
            <person name="Lucas S."/>
            <person name="Okinaka R."/>
            <person name="Richardson P."/>
            <person name="Rubin E."/>
            <person name="Tice H."/>
        </authorList>
    </citation>
    <scope>NUCLEOTIDE SEQUENCE [LARGE SCALE GENOMIC DNA]</scope>
    <source>
        <strain>Sterne</strain>
    </source>
</reference>
<reference key="3">
    <citation type="journal article" date="2009" name="J. Bacteriol.">
        <title>The complete genome sequence of Bacillus anthracis Ames 'Ancestor'.</title>
        <authorList>
            <person name="Ravel J."/>
            <person name="Jiang L."/>
            <person name="Stanley S.T."/>
            <person name="Wilson M.R."/>
            <person name="Decker R.S."/>
            <person name="Read T.D."/>
            <person name="Worsham P."/>
            <person name="Keim P.S."/>
            <person name="Salzberg S.L."/>
            <person name="Fraser-Liggett C.M."/>
            <person name="Rasko D.A."/>
        </authorList>
    </citation>
    <scope>NUCLEOTIDE SEQUENCE [LARGE SCALE GENOMIC DNA]</scope>
    <source>
        <strain>Ames ancestor</strain>
    </source>
</reference>
<reference key="4">
    <citation type="journal article" date="2019" name="Nat. Microbiol.">
        <title>DABs are inorganic carbon pumps found throughout prokaryotic phyla.</title>
        <authorList>
            <person name="Desmarais J.J."/>
            <person name="Flamholz A.I."/>
            <person name="Blikstad C."/>
            <person name="Dugan E.J."/>
            <person name="Laughlin T.G."/>
            <person name="Oltrogge L.M."/>
            <person name="Chen A.W."/>
            <person name="Wetmore K."/>
            <person name="Diamond S."/>
            <person name="Wang J.Y."/>
            <person name="Savage D.F."/>
        </authorList>
    </citation>
    <scope>FUNCTION</scope>
    <scope>EXPRESSION IN ECOLI</scope>
    <source>
        <strain>Sterne</strain>
    </source>
</reference>
<keyword id="KW-1003">Cell membrane</keyword>
<keyword id="KW-0472">Membrane</keyword>
<keyword id="KW-0479">Metal-binding</keyword>
<keyword id="KW-1185">Reference proteome</keyword>
<keyword id="KW-0813">Transport</keyword>
<keyword id="KW-0862">Zinc</keyword>
<organism>
    <name type="scientific">Bacillus anthracis</name>
    <dbReference type="NCBI Taxonomy" id="1392"/>
    <lineage>
        <taxon>Bacteria</taxon>
        <taxon>Bacillati</taxon>
        <taxon>Bacillota</taxon>
        <taxon>Bacilli</taxon>
        <taxon>Bacillales</taxon>
        <taxon>Bacillaceae</taxon>
        <taxon>Bacillus</taxon>
        <taxon>Bacillus cereus group</taxon>
    </lineage>
</organism>
<proteinExistence type="inferred from homology"/>
<evidence type="ECO:0000255" key="1">
    <source>
        <dbReference type="HAMAP-Rule" id="MF_01871"/>
    </source>
</evidence>
<evidence type="ECO:0000269" key="2">
    <source>
    </source>
</evidence>
<evidence type="ECO:0000303" key="3">
    <source>
    </source>
</evidence>
<name>DABA_BACAN</name>
<protein>
    <recommendedName>
        <fullName evidence="1 3">Probable inorganic carbon transporter subunit DabA</fullName>
    </recommendedName>
</protein>
<comment type="function">
    <text evidence="1">Part of an energy-coupled inorganic carbon pump.</text>
</comment>
<comment type="function">
    <text evidence="2">Expression of both dabA and dabB (DA2) restores growth in ambient air to E.coli deleted of its carbonic anhydrase genes (called CAfree, deletion of 'can' and 'cynT').</text>
</comment>
<comment type="cofactor">
    <cofactor evidence="1">
        <name>Zn(2+)</name>
        <dbReference type="ChEBI" id="CHEBI:29105"/>
    </cofactor>
</comment>
<comment type="subunit">
    <text evidence="1">Forms a complex with DabB.</text>
</comment>
<comment type="subcellular location">
    <subcellularLocation>
        <location evidence="1">Cell membrane</location>
        <topology evidence="1">Peripheral membrane protein</topology>
    </subcellularLocation>
</comment>
<comment type="similarity">
    <text evidence="1">Belongs to the inorganic carbon transporter (TC 9.A.2) DabA family.</text>
</comment>
<gene>
    <name evidence="1 3" type="primary">dabA</name>
    <name type="ordered locus">BA_3182</name>
    <name type="ordered locus">GBAA_3182</name>
    <name type="ordered locus">BAS2958</name>
</gene>